<evidence type="ECO:0000250" key="1"/>
<evidence type="ECO:0000255" key="2">
    <source>
        <dbReference type="PROSITE-ProRule" id="PRU00175"/>
    </source>
</evidence>
<sequence length="330" mass="38837">MSSAVASKGMNQGSEFDDNKDMCPICKTDRYLSPDVRFLVNPECYHKICESCVDRIFSLGPAPCPYKSCDKILRKNKFKTQIFDDVGVEKEVDIRKRVFNVFNKTLEDFDNDLEAYNKYLEEVEDIVYKLDNKIDVVETEEKLRTYEELNKQLIMNNMERSKKDLENFEQRQQFEKEMRMKKRMLERQIESEDKMNKEWAKREIVNRLASSTNADDVIEGVKNTVKLKKSSARRKLEEINRVLQNNPYSSLMLSQGLSRKEDNVPFTPFNGDRDLDKRYTIDQESYDDPFIKDLENRKDYIASGFRSDFVYDRMLTEAFMGLGCVVAEEV</sequence>
<reference key="1">
    <citation type="journal article" date="2004" name="Nature">
        <title>Genome evolution in yeasts.</title>
        <authorList>
            <person name="Dujon B."/>
            <person name="Sherman D."/>
            <person name="Fischer G."/>
            <person name="Durrens P."/>
            <person name="Casaregola S."/>
            <person name="Lafontaine I."/>
            <person name="de Montigny J."/>
            <person name="Marck C."/>
            <person name="Neuveglise C."/>
            <person name="Talla E."/>
            <person name="Goffard N."/>
            <person name="Frangeul L."/>
            <person name="Aigle M."/>
            <person name="Anthouard V."/>
            <person name="Babour A."/>
            <person name="Barbe V."/>
            <person name="Barnay S."/>
            <person name="Blanchin S."/>
            <person name="Beckerich J.-M."/>
            <person name="Beyne E."/>
            <person name="Bleykasten C."/>
            <person name="Boisrame A."/>
            <person name="Boyer J."/>
            <person name="Cattolico L."/>
            <person name="Confanioleri F."/>
            <person name="de Daruvar A."/>
            <person name="Despons L."/>
            <person name="Fabre E."/>
            <person name="Fairhead C."/>
            <person name="Ferry-Dumazet H."/>
            <person name="Groppi A."/>
            <person name="Hantraye F."/>
            <person name="Hennequin C."/>
            <person name="Jauniaux N."/>
            <person name="Joyet P."/>
            <person name="Kachouri R."/>
            <person name="Kerrest A."/>
            <person name="Koszul R."/>
            <person name="Lemaire M."/>
            <person name="Lesur I."/>
            <person name="Ma L."/>
            <person name="Muller H."/>
            <person name="Nicaud J.-M."/>
            <person name="Nikolski M."/>
            <person name="Oztas S."/>
            <person name="Ozier-Kalogeropoulos O."/>
            <person name="Pellenz S."/>
            <person name="Potier S."/>
            <person name="Richard G.-F."/>
            <person name="Straub M.-L."/>
            <person name="Suleau A."/>
            <person name="Swennen D."/>
            <person name="Tekaia F."/>
            <person name="Wesolowski-Louvel M."/>
            <person name="Westhof E."/>
            <person name="Wirth B."/>
            <person name="Zeniou-Meyer M."/>
            <person name="Zivanovic Y."/>
            <person name="Bolotin-Fukuhara M."/>
            <person name="Thierry A."/>
            <person name="Bouchier C."/>
            <person name="Caudron B."/>
            <person name="Scarpelli C."/>
            <person name="Gaillardin C."/>
            <person name="Weissenbach J."/>
            <person name="Wincker P."/>
            <person name="Souciet J.-L."/>
        </authorList>
    </citation>
    <scope>NUCLEOTIDE SEQUENCE [LARGE SCALE GENOMIC DNA]</scope>
    <source>
        <strain>ATCC 2001 / BCRC 20586 / JCM 3761 / NBRC 0622 / NRRL Y-65 / CBS 138</strain>
    </source>
</reference>
<reference key="2">
    <citation type="journal article" date="2002" name="Yeast">
        <title>Genomic differences between Candida glabrata and Saccharomyces cerevisiae around the MRPL28 and GCN3 loci.</title>
        <authorList>
            <person name="Walsh D.W."/>
            <person name="Wolfe K.H."/>
            <person name="Butler G."/>
        </authorList>
    </citation>
    <scope>NUCLEOTIDE SEQUENCE [GENOMIC DNA] OF 97-330</scope>
    <source>
        <strain>ATCC 2001 / BCRC 20586 / JCM 3761 / NBRC 0622 / NRRL Y-65 / CBS 138</strain>
    </source>
</reference>
<comment type="function">
    <text evidence="1">Acts as a component of the general transcription and DNA repair factor IIH (TFIIH or factor B), which is essential for both basal and activated transcription, and is involved in nucleotide excision repair (NER) of damaged DNA. TFIIH as CTD kinase activity and DNA-dependent ATPase activity, and is essential for polymerase II transcription (By similarity).</text>
</comment>
<comment type="subcellular location">
    <subcellularLocation>
        <location evidence="1">Nucleus</location>
    </subcellularLocation>
</comment>
<keyword id="KW-0479">Metal-binding</keyword>
<keyword id="KW-0539">Nucleus</keyword>
<keyword id="KW-1185">Reference proteome</keyword>
<keyword id="KW-0804">Transcription</keyword>
<keyword id="KW-0805">Transcription regulation</keyword>
<keyword id="KW-0862">Zinc</keyword>
<keyword id="KW-0863">Zinc-finger</keyword>
<proteinExistence type="inferred from homology"/>
<dbReference type="EMBL" id="CR380957">
    <property type="protein sequence ID" value="CAG61461.1"/>
    <property type="molecule type" value="Genomic_DNA"/>
</dbReference>
<dbReference type="EMBL" id="AY083606">
    <property type="protein sequence ID" value="AAM08093.1"/>
    <property type="molecule type" value="Genomic_DNA"/>
</dbReference>
<dbReference type="RefSeq" id="XP_448500.1">
    <property type="nucleotide sequence ID" value="XM_448500.1"/>
</dbReference>
<dbReference type="SMR" id="Q6FMP4"/>
<dbReference type="FunCoup" id="Q6FMP4">
    <property type="interactions" value="578"/>
</dbReference>
<dbReference type="STRING" id="284593.Q6FMP4"/>
<dbReference type="EnsemblFungi" id="CAGL0K06369g-T">
    <property type="protein sequence ID" value="CAGL0K06369g-T-p1"/>
    <property type="gene ID" value="CAGL0K06369g"/>
</dbReference>
<dbReference type="KEGG" id="cgr:2890432"/>
<dbReference type="CGD" id="CAL0134781">
    <property type="gene designation" value="CAGL0K06369g"/>
</dbReference>
<dbReference type="VEuPathDB" id="FungiDB:B1J91_K06369g"/>
<dbReference type="VEuPathDB" id="FungiDB:CAGL0K06369g"/>
<dbReference type="eggNOG" id="KOG3800">
    <property type="taxonomic scope" value="Eukaryota"/>
</dbReference>
<dbReference type="HOGENOM" id="CLU_048466_1_1_1"/>
<dbReference type="InParanoid" id="Q6FMP4"/>
<dbReference type="OMA" id="PNKRDYY"/>
<dbReference type="Proteomes" id="UP000002428">
    <property type="component" value="Chromosome K"/>
</dbReference>
<dbReference type="GO" id="GO:0070985">
    <property type="term" value="C:transcription factor TFIIK complex"/>
    <property type="evidence" value="ECO:0007669"/>
    <property type="project" value="EnsemblFungi"/>
</dbReference>
<dbReference type="GO" id="GO:0061575">
    <property type="term" value="F:cyclin-dependent protein serine/threonine kinase activator activity"/>
    <property type="evidence" value="ECO:0007669"/>
    <property type="project" value="EnsemblFungi"/>
</dbReference>
<dbReference type="GO" id="GO:0008270">
    <property type="term" value="F:zinc ion binding"/>
    <property type="evidence" value="ECO:0007669"/>
    <property type="project" value="UniProtKB-KW"/>
</dbReference>
<dbReference type="GO" id="GO:0006289">
    <property type="term" value="P:nucleotide-excision repair"/>
    <property type="evidence" value="ECO:0007669"/>
    <property type="project" value="EnsemblFungi"/>
</dbReference>
<dbReference type="GO" id="GO:0006357">
    <property type="term" value="P:regulation of transcription by RNA polymerase II"/>
    <property type="evidence" value="ECO:0007669"/>
    <property type="project" value="TreeGrafter"/>
</dbReference>
<dbReference type="GO" id="GO:0006367">
    <property type="term" value="P:transcription initiation at RNA polymerase II promoter"/>
    <property type="evidence" value="ECO:0007669"/>
    <property type="project" value="EnsemblFungi"/>
</dbReference>
<dbReference type="CDD" id="cd16573">
    <property type="entry name" value="RING-HC_TFB3-like"/>
    <property type="match status" value="1"/>
</dbReference>
<dbReference type="FunFam" id="3.30.40.10:FF:000037">
    <property type="entry name" value="Cdk-activating kinase assembly factor MAT1, centre"/>
    <property type="match status" value="1"/>
</dbReference>
<dbReference type="Gene3D" id="3.30.40.10">
    <property type="entry name" value="Zinc/RING finger domain, C3HC4 (zinc finger)"/>
    <property type="match status" value="1"/>
</dbReference>
<dbReference type="InterPro" id="IPR015877">
    <property type="entry name" value="Cdk-activating_kinase_MAT1_cen"/>
</dbReference>
<dbReference type="InterPro" id="IPR004575">
    <property type="entry name" value="MAT1/Tfb3"/>
</dbReference>
<dbReference type="InterPro" id="IPR001841">
    <property type="entry name" value="Znf_RING"/>
</dbReference>
<dbReference type="InterPro" id="IPR013083">
    <property type="entry name" value="Znf_RING/FYVE/PHD"/>
</dbReference>
<dbReference type="InterPro" id="IPR017907">
    <property type="entry name" value="Znf_RING_CS"/>
</dbReference>
<dbReference type="NCBIfam" id="TIGR00570">
    <property type="entry name" value="cdk7"/>
    <property type="match status" value="1"/>
</dbReference>
<dbReference type="PANTHER" id="PTHR12683">
    <property type="entry name" value="CDK-ACTIVATING KINASE ASSEMBLY FACTOR MAT1"/>
    <property type="match status" value="1"/>
</dbReference>
<dbReference type="PANTHER" id="PTHR12683:SF13">
    <property type="entry name" value="CDK-ACTIVATING KINASE ASSEMBLY FACTOR MAT1"/>
    <property type="match status" value="1"/>
</dbReference>
<dbReference type="Pfam" id="PF06391">
    <property type="entry name" value="MAT1"/>
    <property type="match status" value="1"/>
</dbReference>
<dbReference type="Pfam" id="PF17121">
    <property type="entry name" value="zf-C3HC4_5"/>
    <property type="match status" value="1"/>
</dbReference>
<dbReference type="PIRSF" id="PIRSF003338">
    <property type="entry name" value="MAT1_metazoa"/>
    <property type="match status" value="1"/>
</dbReference>
<dbReference type="SUPFAM" id="SSF57850">
    <property type="entry name" value="RING/U-box"/>
    <property type="match status" value="1"/>
</dbReference>
<dbReference type="PROSITE" id="PS00518">
    <property type="entry name" value="ZF_RING_1"/>
    <property type="match status" value="1"/>
</dbReference>
<dbReference type="PROSITE" id="PS50089">
    <property type="entry name" value="ZF_RING_2"/>
    <property type="match status" value="1"/>
</dbReference>
<protein>
    <recommendedName>
        <fullName>RNA polymerase II transcription factor B subunit 3</fullName>
    </recommendedName>
    <alternativeName>
        <fullName>RNA polymerase II transcription factor B 38 kDa subunit</fullName>
    </alternativeName>
    <alternativeName>
        <fullName>RNA polymerase II transcription factor B p38 subunit</fullName>
    </alternativeName>
</protein>
<feature type="chain" id="PRO_0000055937" description="RNA polymerase II transcription factor B subunit 3">
    <location>
        <begin position="1"/>
        <end position="330"/>
    </location>
</feature>
<feature type="zinc finger region" description="RING-type" evidence="2">
    <location>
        <begin position="23"/>
        <end position="68"/>
    </location>
</feature>
<name>TFB3_CANGA</name>
<accession>Q6FMP4</accession>
<accession>Q8TFL7</accession>
<gene>
    <name type="primary">TFB3</name>
    <name type="ordered locus">CAGL0K06369g</name>
</gene>
<organism>
    <name type="scientific">Candida glabrata (strain ATCC 2001 / BCRC 20586 / JCM 3761 / NBRC 0622 / NRRL Y-65 / CBS 138)</name>
    <name type="common">Yeast</name>
    <name type="synonym">Nakaseomyces glabratus</name>
    <dbReference type="NCBI Taxonomy" id="284593"/>
    <lineage>
        <taxon>Eukaryota</taxon>
        <taxon>Fungi</taxon>
        <taxon>Dikarya</taxon>
        <taxon>Ascomycota</taxon>
        <taxon>Saccharomycotina</taxon>
        <taxon>Saccharomycetes</taxon>
        <taxon>Saccharomycetales</taxon>
        <taxon>Saccharomycetaceae</taxon>
        <taxon>Nakaseomyces</taxon>
    </lineage>
</organism>